<evidence type="ECO:0000255" key="1">
    <source>
        <dbReference type="HAMAP-Rule" id="MF_00380"/>
    </source>
</evidence>
<evidence type="ECO:0000256" key="2">
    <source>
        <dbReference type="SAM" id="MobiDB-lite"/>
    </source>
</evidence>
<organism>
    <name type="scientific">Sodalis glossinidius (strain morsitans)</name>
    <dbReference type="NCBI Taxonomy" id="343509"/>
    <lineage>
        <taxon>Bacteria</taxon>
        <taxon>Pseudomonadati</taxon>
        <taxon>Pseudomonadota</taxon>
        <taxon>Gammaproteobacteria</taxon>
        <taxon>Enterobacterales</taxon>
        <taxon>Bruguierivoracaceae</taxon>
        <taxon>Sodalis</taxon>
    </lineage>
</organism>
<accession>Q2NT26</accession>
<dbReference type="EMBL" id="AP008232">
    <property type="protein sequence ID" value="BAE74699.1"/>
    <property type="molecule type" value="Genomic_DNA"/>
</dbReference>
<dbReference type="RefSeq" id="WP_011411244.1">
    <property type="nucleotide sequence ID" value="NZ_LN854557.1"/>
</dbReference>
<dbReference type="SMR" id="Q2NT26"/>
<dbReference type="STRING" id="343509.SG1424"/>
<dbReference type="KEGG" id="sgl:SG1424"/>
<dbReference type="eggNOG" id="COG0776">
    <property type="taxonomic scope" value="Bacteria"/>
</dbReference>
<dbReference type="HOGENOM" id="CLU_105066_1_3_6"/>
<dbReference type="OrthoDB" id="9797747at2"/>
<dbReference type="BioCyc" id="SGLO343509:SGP1_RS12620-MONOMER"/>
<dbReference type="Proteomes" id="UP000001932">
    <property type="component" value="Chromosome"/>
</dbReference>
<dbReference type="GO" id="GO:0005829">
    <property type="term" value="C:cytosol"/>
    <property type="evidence" value="ECO:0007669"/>
    <property type="project" value="TreeGrafter"/>
</dbReference>
<dbReference type="GO" id="GO:0003677">
    <property type="term" value="F:DNA binding"/>
    <property type="evidence" value="ECO:0007669"/>
    <property type="project" value="UniProtKB-UniRule"/>
</dbReference>
<dbReference type="GO" id="GO:0030527">
    <property type="term" value="F:structural constituent of chromatin"/>
    <property type="evidence" value="ECO:0007669"/>
    <property type="project" value="InterPro"/>
</dbReference>
<dbReference type="GO" id="GO:0006310">
    <property type="term" value="P:DNA recombination"/>
    <property type="evidence" value="ECO:0007669"/>
    <property type="project" value="UniProtKB-UniRule"/>
</dbReference>
<dbReference type="GO" id="GO:0009893">
    <property type="term" value="P:positive regulation of metabolic process"/>
    <property type="evidence" value="ECO:0007669"/>
    <property type="project" value="UniProtKB-ARBA"/>
</dbReference>
<dbReference type="GO" id="GO:0006355">
    <property type="term" value="P:regulation of DNA-templated transcription"/>
    <property type="evidence" value="ECO:0007669"/>
    <property type="project" value="UniProtKB-UniRule"/>
</dbReference>
<dbReference type="GO" id="GO:0006417">
    <property type="term" value="P:regulation of translation"/>
    <property type="evidence" value="ECO:0007669"/>
    <property type="project" value="UniProtKB-UniRule"/>
</dbReference>
<dbReference type="CDD" id="cd13835">
    <property type="entry name" value="IHF_A"/>
    <property type="match status" value="1"/>
</dbReference>
<dbReference type="FunFam" id="4.10.520.10:FF:000002">
    <property type="entry name" value="Integration host factor subunit alpha"/>
    <property type="match status" value="1"/>
</dbReference>
<dbReference type="Gene3D" id="4.10.520.10">
    <property type="entry name" value="IHF-like DNA-binding proteins"/>
    <property type="match status" value="1"/>
</dbReference>
<dbReference type="HAMAP" id="MF_00380">
    <property type="entry name" value="IHF_alpha"/>
    <property type="match status" value="1"/>
</dbReference>
<dbReference type="InterPro" id="IPR000119">
    <property type="entry name" value="Hist_DNA-bd"/>
</dbReference>
<dbReference type="InterPro" id="IPR020816">
    <property type="entry name" value="Histone-like_DNA-bd_CS"/>
</dbReference>
<dbReference type="InterPro" id="IPR010992">
    <property type="entry name" value="IHF-like_DNA-bd_dom_sf"/>
</dbReference>
<dbReference type="InterPro" id="IPR005684">
    <property type="entry name" value="IHF_alpha"/>
</dbReference>
<dbReference type="NCBIfam" id="TIGR00987">
    <property type="entry name" value="himA"/>
    <property type="match status" value="1"/>
</dbReference>
<dbReference type="NCBIfam" id="NF001401">
    <property type="entry name" value="PRK00285.1"/>
    <property type="match status" value="1"/>
</dbReference>
<dbReference type="PANTHER" id="PTHR33175">
    <property type="entry name" value="DNA-BINDING PROTEIN HU"/>
    <property type="match status" value="1"/>
</dbReference>
<dbReference type="PANTHER" id="PTHR33175:SF2">
    <property type="entry name" value="INTEGRATION HOST FACTOR SUBUNIT ALPHA"/>
    <property type="match status" value="1"/>
</dbReference>
<dbReference type="Pfam" id="PF00216">
    <property type="entry name" value="Bac_DNA_binding"/>
    <property type="match status" value="1"/>
</dbReference>
<dbReference type="PRINTS" id="PR01727">
    <property type="entry name" value="DNABINDINGHU"/>
</dbReference>
<dbReference type="SMART" id="SM00411">
    <property type="entry name" value="BHL"/>
    <property type="match status" value="1"/>
</dbReference>
<dbReference type="SUPFAM" id="SSF47729">
    <property type="entry name" value="IHF-like DNA-binding proteins"/>
    <property type="match status" value="1"/>
</dbReference>
<dbReference type="PROSITE" id="PS00045">
    <property type="entry name" value="HISTONE_LIKE"/>
    <property type="match status" value="1"/>
</dbReference>
<name>IHFA_SODGM</name>
<protein>
    <recommendedName>
        <fullName evidence="1">Integration host factor subunit alpha</fullName>
        <shortName evidence="1">IHF-alpha</shortName>
    </recommendedName>
</protein>
<sequence>MALTKAEMSEYLFEKLGLSKRDAKEIVELFFEEVRRALENGEQVKLSGFGNFDLRDKNQRPGRNPKTGEDIPITARRVVTFRPGQKLKSRVENASPKE</sequence>
<feature type="chain" id="PRO_0000277784" description="Integration host factor subunit alpha">
    <location>
        <begin position="1"/>
        <end position="98"/>
    </location>
</feature>
<feature type="region of interest" description="Disordered" evidence="2">
    <location>
        <begin position="49"/>
        <end position="70"/>
    </location>
</feature>
<keyword id="KW-0233">DNA recombination</keyword>
<keyword id="KW-0238">DNA-binding</keyword>
<keyword id="KW-0804">Transcription</keyword>
<keyword id="KW-0805">Transcription regulation</keyword>
<keyword id="KW-0810">Translation regulation</keyword>
<gene>
    <name evidence="1" type="primary">ihfA</name>
    <name evidence="1" type="synonym">himA</name>
    <name type="ordered locus">SG1424</name>
</gene>
<proteinExistence type="inferred from homology"/>
<reference key="1">
    <citation type="journal article" date="2006" name="Genome Res.">
        <title>Massive genome erosion and functional adaptations provide insights into the symbiotic lifestyle of Sodalis glossinidius in the tsetse host.</title>
        <authorList>
            <person name="Toh H."/>
            <person name="Weiss B.L."/>
            <person name="Perkin S.A.H."/>
            <person name="Yamashita A."/>
            <person name="Oshima K."/>
            <person name="Hattori M."/>
            <person name="Aksoy S."/>
        </authorList>
    </citation>
    <scope>NUCLEOTIDE SEQUENCE [LARGE SCALE GENOMIC DNA]</scope>
    <source>
        <strain>morsitans</strain>
    </source>
</reference>
<comment type="function">
    <text evidence="1">This protein is one of the two subunits of integration host factor, a specific DNA-binding protein that functions in genetic recombination as well as in transcriptional and translational control.</text>
</comment>
<comment type="subunit">
    <text evidence="1">Heterodimer of an alpha and a beta chain.</text>
</comment>
<comment type="similarity">
    <text evidence="1">Belongs to the bacterial histone-like protein family.</text>
</comment>